<protein>
    <recommendedName>
        <fullName>NGFI-A-binding protein 2</fullName>
    </recommendedName>
    <alternativeName>
        <fullName>EGR-1-binding protein 2</fullName>
    </alternativeName>
</protein>
<sequence length="525" mass="56577">MHRAPSPTAEQPPGRGDNTRRTPQPRFKASAPAMALPRTLGELQLYRVLQRANLLSYYETFIQQGGDDVQQLCEAGEEEFLEIMALVGMATKPLHVRRLQKALREWATNPGLFSQPVPAVPVSSIPLFKISETAGTRKGSMSNGHGSPGEKAGSARSFSPKSPLELGEKLSPLPGGPGAGDPRIWPGQSTPESDVGAGGEEEAGSPPFSPPAGGGVSEGPGVGGVAAGGAGGGPDRLEPEMVRMVVESVERIFRSFPRGDTGEIASLLKLNKKLARSVGHIFEMDDHDAQKEEEIRKYSVIYGRLDSKRREGKQLSLHELTINEAAAQFCMRDNTLLLRRVELFSLSRQVARESTYLSSLKGSRLHSEELGGPPLKKLKQEVGEQSHNEIQQPPPGPESYAPPYRPSLEEDSASLSGESLDGHLQAVGSCPRLTPPPADLPLALPAHGLWSRHILQQTLMDEGLRLARLVSHDRVGRLSPCVPAKPPLAEFEEGLLDRCPAPGPHPALVEGRRSSVKVEAEASRQ</sequence>
<dbReference type="EMBL" id="U47543">
    <property type="protein sequence ID" value="AAC52650.1"/>
    <property type="molecule type" value="mRNA"/>
</dbReference>
<dbReference type="EMBL" id="CH466578">
    <property type="protein sequence ID" value="EDL24515.1"/>
    <property type="molecule type" value="Genomic_DNA"/>
</dbReference>
<dbReference type="EMBL" id="BC045139">
    <property type="protein sequence ID" value="AAH45139.1"/>
    <property type="molecule type" value="mRNA"/>
</dbReference>
<dbReference type="CCDS" id="CCDS24247.1">
    <molecule id="Q61127-1"/>
</dbReference>
<dbReference type="RefSeq" id="NP_001116367.1">
    <property type="nucleotide sequence ID" value="NM_001122895.1"/>
</dbReference>
<dbReference type="RefSeq" id="NP_032694.2">
    <molecule id="Q61127-1"/>
    <property type="nucleotide sequence ID" value="NM_008668.2"/>
</dbReference>
<dbReference type="SMR" id="Q61127"/>
<dbReference type="BioGRID" id="201681">
    <property type="interactions" value="5"/>
</dbReference>
<dbReference type="FunCoup" id="Q61127">
    <property type="interactions" value="1484"/>
</dbReference>
<dbReference type="IntAct" id="Q61127">
    <property type="interactions" value="5"/>
</dbReference>
<dbReference type="MINT" id="Q61127"/>
<dbReference type="STRING" id="10090.ENSMUSP00000026469"/>
<dbReference type="GlyGen" id="Q61127">
    <property type="glycosylation" value="1 site"/>
</dbReference>
<dbReference type="iPTMnet" id="Q61127"/>
<dbReference type="PhosphoSitePlus" id="Q61127"/>
<dbReference type="jPOST" id="Q61127"/>
<dbReference type="PaxDb" id="10090-ENSMUSP00000026469"/>
<dbReference type="PeptideAtlas" id="Q61127"/>
<dbReference type="ProteomicsDB" id="286139">
    <molecule id="Q61127-1"/>
</dbReference>
<dbReference type="ProteomicsDB" id="286140">
    <molecule id="Q61127-2"/>
</dbReference>
<dbReference type="Pumba" id="Q61127"/>
<dbReference type="Antibodypedia" id="3858">
    <property type="antibodies" value="413 antibodies from 36 providers"/>
</dbReference>
<dbReference type="DNASU" id="17937"/>
<dbReference type="Ensembl" id="ENSMUST00000026469.9">
    <molecule id="Q61127-1"/>
    <property type="protein sequence ID" value="ENSMUSP00000026469.3"/>
    <property type="gene ID" value="ENSMUSG00000025402.13"/>
</dbReference>
<dbReference type="GeneID" id="17937"/>
<dbReference type="KEGG" id="mmu:17937"/>
<dbReference type="UCSC" id="uc011xpt.1">
    <molecule id="Q61127-1"/>
    <property type="organism name" value="mouse"/>
</dbReference>
<dbReference type="AGR" id="MGI:107563"/>
<dbReference type="CTD" id="4665"/>
<dbReference type="MGI" id="MGI:107563">
    <property type="gene designation" value="Nab2"/>
</dbReference>
<dbReference type="VEuPathDB" id="HostDB:ENSMUSG00000025402"/>
<dbReference type="eggNOG" id="KOG3835">
    <property type="taxonomic scope" value="Eukaryota"/>
</dbReference>
<dbReference type="GeneTree" id="ENSGT00390000006330"/>
<dbReference type="HOGENOM" id="CLU_029394_2_0_1"/>
<dbReference type="InParanoid" id="Q61127"/>
<dbReference type="OMA" id="AMQWGNP"/>
<dbReference type="OrthoDB" id="10028556at2759"/>
<dbReference type="PhylomeDB" id="Q61127"/>
<dbReference type="TreeFam" id="TF315501"/>
<dbReference type="Reactome" id="R-MMU-9031628">
    <property type="pathway name" value="NGF-stimulated transcription"/>
</dbReference>
<dbReference type="BioGRID-ORCS" id="17937">
    <property type="hits" value="0 hits in 79 CRISPR screens"/>
</dbReference>
<dbReference type="ChiTaRS" id="Nab2">
    <property type="organism name" value="mouse"/>
</dbReference>
<dbReference type="PRO" id="PR:Q61127"/>
<dbReference type="Proteomes" id="UP000000589">
    <property type="component" value="Chromosome 10"/>
</dbReference>
<dbReference type="RNAct" id="Q61127">
    <property type="molecule type" value="protein"/>
</dbReference>
<dbReference type="Bgee" id="ENSMUSG00000025402">
    <property type="expression patterns" value="Expressed in cerebellar vermis and 226 other cell types or tissues"/>
</dbReference>
<dbReference type="ExpressionAtlas" id="Q61127">
    <property type="expression patterns" value="baseline and differential"/>
</dbReference>
<dbReference type="GO" id="GO:0005634">
    <property type="term" value="C:nucleus"/>
    <property type="evidence" value="ECO:0000314"/>
    <property type="project" value="MGI"/>
</dbReference>
<dbReference type="GO" id="GO:0042802">
    <property type="term" value="F:identical protein binding"/>
    <property type="evidence" value="ECO:0007669"/>
    <property type="project" value="Ensembl"/>
</dbReference>
<dbReference type="GO" id="GO:0003712">
    <property type="term" value="F:transcription coregulator activity"/>
    <property type="evidence" value="ECO:0007669"/>
    <property type="project" value="InterPro"/>
</dbReference>
<dbReference type="GO" id="GO:0001958">
    <property type="term" value="P:endochondral ossification"/>
    <property type="evidence" value="ECO:0000316"/>
    <property type="project" value="MGI"/>
</dbReference>
<dbReference type="GO" id="GO:0042552">
    <property type="term" value="P:myelination"/>
    <property type="evidence" value="ECO:0000316"/>
    <property type="project" value="MGI"/>
</dbReference>
<dbReference type="GO" id="GO:0016480">
    <property type="term" value="P:negative regulation of transcription by RNA polymerase III"/>
    <property type="evidence" value="ECO:0000266"/>
    <property type="project" value="MGI"/>
</dbReference>
<dbReference type="GO" id="GO:0006355">
    <property type="term" value="P:regulation of DNA-templated transcription"/>
    <property type="evidence" value="ECO:0000316"/>
    <property type="project" value="MGI"/>
</dbReference>
<dbReference type="GO" id="GO:0045682">
    <property type="term" value="P:regulation of epidermis development"/>
    <property type="evidence" value="ECO:0000316"/>
    <property type="project" value="MGI"/>
</dbReference>
<dbReference type="GO" id="GO:0014037">
    <property type="term" value="P:Schwann cell differentiation"/>
    <property type="evidence" value="ECO:0000316"/>
    <property type="project" value="MGI"/>
</dbReference>
<dbReference type="FunFam" id="1.20.120.2010:FF:000001">
    <property type="entry name" value="NGFI-A-binding protein 1 isoform X1"/>
    <property type="match status" value="1"/>
</dbReference>
<dbReference type="Gene3D" id="1.20.120.2010">
    <property type="entry name" value="NAB conserved domain 2"/>
    <property type="match status" value="1"/>
</dbReference>
<dbReference type="Gene3D" id="1.10.150.50">
    <property type="entry name" value="Transcription Factor, Ets-1"/>
    <property type="match status" value="1"/>
</dbReference>
<dbReference type="InterPro" id="IPR006989">
    <property type="entry name" value="NAB_co-repressor_dom"/>
</dbReference>
<dbReference type="InterPro" id="IPR039040">
    <property type="entry name" value="NAB_fam"/>
</dbReference>
<dbReference type="InterPro" id="IPR006988">
    <property type="entry name" value="Nab_N"/>
</dbReference>
<dbReference type="InterPro" id="IPR038398">
    <property type="entry name" value="NCD2_sf"/>
</dbReference>
<dbReference type="InterPro" id="IPR013761">
    <property type="entry name" value="SAM/pointed_sf"/>
</dbReference>
<dbReference type="PANTHER" id="PTHR12623">
    <property type="entry name" value="NGFI-A BINDING PROTEIN"/>
    <property type="match status" value="1"/>
</dbReference>
<dbReference type="PANTHER" id="PTHR12623:SF6">
    <property type="entry name" value="NGFI-A-BINDING PROTEIN 2"/>
    <property type="match status" value="1"/>
</dbReference>
<dbReference type="Pfam" id="PF04905">
    <property type="entry name" value="NCD2"/>
    <property type="match status" value="1"/>
</dbReference>
<dbReference type="Pfam" id="PF04904">
    <property type="entry name" value="SAM_NCD1"/>
    <property type="match status" value="1"/>
</dbReference>
<evidence type="ECO:0000250" key="1"/>
<evidence type="ECO:0000250" key="2">
    <source>
        <dbReference type="UniProtKB" id="Q15742"/>
    </source>
</evidence>
<evidence type="ECO:0000256" key="3">
    <source>
        <dbReference type="SAM" id="MobiDB-lite"/>
    </source>
</evidence>
<evidence type="ECO:0000303" key="4">
    <source>
    </source>
</evidence>
<evidence type="ECO:0000305" key="5"/>
<evidence type="ECO:0007744" key="6">
    <source>
    </source>
</evidence>
<evidence type="ECO:0007744" key="7">
    <source>
    </source>
</evidence>
<accession>Q61127</accession>
<accession>Q80VR9</accession>
<comment type="function">
    <text>Acts as a transcriptional repressor for zinc finger transcription factors EGR1 and EGR2. Isoform 2 lacks repression ability.</text>
</comment>
<comment type="subunit">
    <text evidence="1">Homomultimers may associate with EGR1 bound to DNA.</text>
</comment>
<comment type="subcellular location">
    <subcellularLocation>
        <location>Nucleus</location>
    </subcellularLocation>
    <text>Isoform 2 is not localized to the nucleus.</text>
</comment>
<comment type="alternative products">
    <event type="alternative splicing"/>
    <isoform>
        <id>Q61127-1</id>
        <name>1</name>
        <sequence type="displayed"/>
    </isoform>
    <isoform>
        <id>Q61127-2</id>
        <name>2</name>
        <sequence type="described" ref="VSP_003388 VSP_003389"/>
    </isoform>
</comment>
<comment type="tissue specificity">
    <text>Highly expressed in brain and thymus, and at lower levels in spleen, kidney, heart and testis. Isoform 1 is predominantly expressed in testis, whereas isoform 3 is more abundant in thymus.</text>
</comment>
<comment type="induction">
    <text>By serum stimulation.</text>
</comment>
<comment type="domain">
    <text>The NAB conserved domain 1 (NCD1) interacts with EGR1 inhibitory domain and mediates multimerization.</text>
</comment>
<comment type="domain">
    <text>The NAB conserved domain 2 (NCD2) is necessary for transcriptional repression.</text>
</comment>
<comment type="PTM">
    <text evidence="1">Sumoylation by EGR2 represses EGR2 transcriptional activity in hindbrain.</text>
</comment>
<comment type="similarity">
    <text evidence="5">Belongs to the NAB family.</text>
</comment>
<proteinExistence type="evidence at protein level"/>
<feature type="chain" id="PRO_0000077043" description="NGFI-A-binding protein 2">
    <location>
        <begin position="1"/>
        <end position="525"/>
    </location>
</feature>
<feature type="region of interest" description="Disordered" evidence="3">
    <location>
        <begin position="1"/>
        <end position="31"/>
    </location>
</feature>
<feature type="region of interest" description="NCD1">
    <location>
        <begin position="35"/>
        <end position="113"/>
    </location>
</feature>
<feature type="region of interest" description="Disordered" evidence="3">
    <location>
        <begin position="135"/>
        <end position="238"/>
    </location>
</feature>
<feature type="region of interest" description="NCD2">
    <location>
        <begin position="267"/>
        <end position="356"/>
    </location>
</feature>
<feature type="region of interest" description="Necessary for nuclear localization" evidence="1">
    <location>
        <begin position="353"/>
        <end position="384"/>
    </location>
</feature>
<feature type="region of interest" description="Disordered" evidence="3">
    <location>
        <begin position="381"/>
        <end position="416"/>
    </location>
</feature>
<feature type="region of interest" description="Disordered" evidence="3">
    <location>
        <begin position="501"/>
        <end position="525"/>
    </location>
</feature>
<feature type="compositionally biased region" description="Gly residues" evidence="3">
    <location>
        <begin position="212"/>
        <end position="234"/>
    </location>
</feature>
<feature type="compositionally biased region" description="Basic and acidic residues" evidence="3">
    <location>
        <begin position="510"/>
        <end position="525"/>
    </location>
</feature>
<feature type="modified residue" description="Phosphoserine" evidence="2">
    <location>
        <position position="6"/>
    </location>
</feature>
<feature type="modified residue" description="Phosphoserine" evidence="7">
    <location>
        <position position="157"/>
    </location>
</feature>
<feature type="modified residue" description="Phosphoserine" evidence="7">
    <location>
        <position position="159"/>
    </location>
</feature>
<feature type="modified residue" description="Phosphoserine" evidence="7">
    <location>
        <position position="162"/>
    </location>
</feature>
<feature type="modified residue" description="Phosphoserine" evidence="6 7">
    <location>
        <position position="171"/>
    </location>
</feature>
<feature type="modified residue" description="Phosphoserine" evidence="7">
    <location>
        <position position="479"/>
    </location>
</feature>
<feature type="cross-link" description="Glycyl lysine isopeptide (Lys-Gly) (interchain with G-Cter in SUMO1)" evidence="2">
    <location>
        <position position="379"/>
    </location>
</feature>
<feature type="cross-link" description="Glycyl lysine isopeptide (Lys-Gly) (interchain with G-Cter in SUMO1); alternate" evidence="2">
    <location>
        <position position="517"/>
    </location>
</feature>
<feature type="cross-link" description="Glycyl lysine isopeptide (Lys-Gly) (interchain with G-Cter in SUMO2); alternate" evidence="2">
    <location>
        <position position="517"/>
    </location>
</feature>
<feature type="splice variant" id="VSP_003388" description="In isoform 2." evidence="4">
    <original>LTI</original>
    <variation>ASL</variation>
    <location>
        <begin position="320"/>
        <end position="322"/>
    </location>
</feature>
<feature type="splice variant" id="VSP_003389" description="In isoform 2." evidence="4">
    <location>
        <begin position="323"/>
        <end position="525"/>
    </location>
</feature>
<feature type="sequence conflict" description="In Ref. 1; AAC52650." evidence="5" ref="1">
    <original>G</original>
    <variation>C</variation>
    <location>
        <position position="233"/>
    </location>
</feature>
<feature type="sequence conflict" description="In Ref. 1; AAC52650." evidence="5" ref="1">
    <original>R</original>
    <variation>W</variation>
    <location>
        <position position="465"/>
    </location>
</feature>
<reference key="1">
    <citation type="journal article" date="1996" name="Mol. Cell. Biol.">
        <title>NAB2, a corepressor of NGFI-A (Egr-1) and Krox20, is induced by proliferative and differentiative stimuli.</title>
        <authorList>
            <person name="Svaren J."/>
            <person name="Sevetson B.R."/>
            <person name="Apel E.D."/>
            <person name="Zimonjic D.B."/>
            <person name="Popescu N.C."/>
            <person name="Milbrandt J."/>
        </authorList>
    </citation>
    <scope>NUCLEOTIDE SEQUENCE [MRNA] (ISOFORMS 1 AND 2)</scope>
    <source>
        <tissue>Brain</tissue>
    </source>
</reference>
<reference key="2">
    <citation type="journal article" date="1997" name="Genomics">
        <title>The Nab2 and Stat6 genes share a common transcription termination region.</title>
        <authorList>
            <person name="Svaren J."/>
            <person name="Apel E.D."/>
            <person name="Simburger K.S."/>
            <person name="Jenkins N.A."/>
            <person name="Gilbert D.J."/>
            <person name="Copeland N.G."/>
            <person name="Milbrandt J."/>
        </authorList>
    </citation>
    <scope>PARTIAL NUCLEOTIDE SEQUENCE (ISOFORM 2)</scope>
</reference>
<reference key="3">
    <citation type="submission" date="2005-07" db="EMBL/GenBank/DDBJ databases">
        <authorList>
            <person name="Mural R.J."/>
            <person name="Adams M.D."/>
            <person name="Myers E.W."/>
            <person name="Smith H.O."/>
            <person name="Venter J.C."/>
        </authorList>
    </citation>
    <scope>NUCLEOTIDE SEQUENCE [LARGE SCALE GENOMIC DNA]</scope>
</reference>
<reference key="4">
    <citation type="journal article" date="2004" name="Genome Res.">
        <title>The status, quality, and expansion of the NIH full-length cDNA project: the Mammalian Gene Collection (MGC).</title>
        <authorList>
            <consortium name="The MGC Project Team"/>
        </authorList>
    </citation>
    <scope>NUCLEOTIDE SEQUENCE [LARGE SCALE MRNA]</scope>
    <source>
        <tissue>Olfactory epithelium</tissue>
    </source>
</reference>
<reference key="5">
    <citation type="journal article" date="2009" name="Mol. Cell. Proteomics">
        <title>Large scale localization of protein phosphorylation by use of electron capture dissociation mass spectrometry.</title>
        <authorList>
            <person name="Sweet S.M."/>
            <person name="Bailey C.M."/>
            <person name="Cunningham D.L."/>
            <person name="Heath J.K."/>
            <person name="Cooper H.J."/>
        </authorList>
    </citation>
    <scope>PHOSPHORYLATION [LARGE SCALE ANALYSIS] AT SER-171</scope>
    <scope>IDENTIFICATION BY MASS SPECTROMETRY [LARGE SCALE ANALYSIS]</scope>
    <source>
        <tissue>Embryonic fibroblast</tissue>
    </source>
</reference>
<reference key="6">
    <citation type="journal article" date="2010" name="Cell">
        <title>A tissue-specific atlas of mouse protein phosphorylation and expression.</title>
        <authorList>
            <person name="Huttlin E.L."/>
            <person name="Jedrychowski M.P."/>
            <person name="Elias J.E."/>
            <person name="Goswami T."/>
            <person name="Rad R."/>
            <person name="Beausoleil S.A."/>
            <person name="Villen J."/>
            <person name="Haas W."/>
            <person name="Sowa M.E."/>
            <person name="Gygi S.P."/>
        </authorList>
    </citation>
    <scope>PHOSPHORYLATION [LARGE SCALE ANALYSIS] AT SER-157; SER-159; SER-162; SER-171 AND SER-479</scope>
    <scope>IDENTIFICATION BY MASS SPECTROMETRY [LARGE SCALE ANALYSIS]</scope>
    <source>
        <tissue>Brain</tissue>
        <tissue>Brown adipose tissue</tissue>
        <tissue>Heart</tissue>
        <tissue>Kidney</tissue>
        <tissue>Lung</tissue>
        <tissue>Spleen</tissue>
        <tissue>Testis</tissue>
    </source>
</reference>
<name>NAB2_MOUSE</name>
<organism>
    <name type="scientific">Mus musculus</name>
    <name type="common">Mouse</name>
    <dbReference type="NCBI Taxonomy" id="10090"/>
    <lineage>
        <taxon>Eukaryota</taxon>
        <taxon>Metazoa</taxon>
        <taxon>Chordata</taxon>
        <taxon>Craniata</taxon>
        <taxon>Vertebrata</taxon>
        <taxon>Euteleostomi</taxon>
        <taxon>Mammalia</taxon>
        <taxon>Eutheria</taxon>
        <taxon>Euarchontoglires</taxon>
        <taxon>Glires</taxon>
        <taxon>Rodentia</taxon>
        <taxon>Myomorpha</taxon>
        <taxon>Muroidea</taxon>
        <taxon>Muridae</taxon>
        <taxon>Murinae</taxon>
        <taxon>Mus</taxon>
        <taxon>Mus</taxon>
    </lineage>
</organism>
<gene>
    <name type="primary">Nab2</name>
</gene>
<keyword id="KW-0025">Alternative splicing</keyword>
<keyword id="KW-1017">Isopeptide bond</keyword>
<keyword id="KW-0539">Nucleus</keyword>
<keyword id="KW-0597">Phosphoprotein</keyword>
<keyword id="KW-1185">Reference proteome</keyword>
<keyword id="KW-0678">Repressor</keyword>
<keyword id="KW-0804">Transcription</keyword>
<keyword id="KW-0805">Transcription regulation</keyword>
<keyword id="KW-0832">Ubl conjugation</keyword>